<organism>
    <name type="scientific">Lactobacillus gasseri (strain ATCC 33323 / DSM 20243 / BCRC 14619 / CIP 102991 / JCM 1131 / KCTC 3163 / NCIMB 11718 / NCTC 13722 / AM63)</name>
    <dbReference type="NCBI Taxonomy" id="324831"/>
    <lineage>
        <taxon>Bacteria</taxon>
        <taxon>Bacillati</taxon>
        <taxon>Bacillota</taxon>
        <taxon>Bacilli</taxon>
        <taxon>Lactobacillales</taxon>
        <taxon>Lactobacillaceae</taxon>
        <taxon>Lactobacillus</taxon>
    </lineage>
</organism>
<protein>
    <recommendedName>
        <fullName evidence="1">Large ribosomal subunit protein bL17</fullName>
    </recommendedName>
    <alternativeName>
        <fullName evidence="2">50S ribosomal protein L17</fullName>
    </alternativeName>
</protein>
<accession>Q045Z9</accession>
<evidence type="ECO:0000255" key="1">
    <source>
        <dbReference type="HAMAP-Rule" id="MF_01368"/>
    </source>
</evidence>
<evidence type="ECO:0000305" key="2"/>
<keyword id="KW-0687">Ribonucleoprotein</keyword>
<keyword id="KW-0689">Ribosomal protein</keyword>
<comment type="subunit">
    <text evidence="1">Part of the 50S ribosomal subunit. Contacts protein L32.</text>
</comment>
<comment type="similarity">
    <text evidence="1">Belongs to the bacterial ribosomal protein bL17 family.</text>
</comment>
<gene>
    <name evidence="1" type="primary">rplQ</name>
    <name type="ordered locus">LGAS_0317</name>
</gene>
<proteinExistence type="inferred from homology"/>
<name>RL17_LACGA</name>
<feature type="chain" id="PRO_1000055851" description="Large ribosomal subunit protein bL17">
    <location>
        <begin position="1"/>
        <end position="127"/>
    </location>
</feature>
<reference key="1">
    <citation type="journal article" date="2006" name="Proc. Natl. Acad. Sci. U.S.A.">
        <title>Comparative genomics of the lactic acid bacteria.</title>
        <authorList>
            <person name="Makarova K.S."/>
            <person name="Slesarev A."/>
            <person name="Wolf Y.I."/>
            <person name="Sorokin A."/>
            <person name="Mirkin B."/>
            <person name="Koonin E.V."/>
            <person name="Pavlov A."/>
            <person name="Pavlova N."/>
            <person name="Karamychev V."/>
            <person name="Polouchine N."/>
            <person name="Shakhova V."/>
            <person name="Grigoriev I."/>
            <person name="Lou Y."/>
            <person name="Rohksar D."/>
            <person name="Lucas S."/>
            <person name="Huang K."/>
            <person name="Goodstein D.M."/>
            <person name="Hawkins T."/>
            <person name="Plengvidhya V."/>
            <person name="Welker D."/>
            <person name="Hughes J."/>
            <person name="Goh Y."/>
            <person name="Benson A."/>
            <person name="Baldwin K."/>
            <person name="Lee J.-H."/>
            <person name="Diaz-Muniz I."/>
            <person name="Dosti B."/>
            <person name="Smeianov V."/>
            <person name="Wechter W."/>
            <person name="Barabote R."/>
            <person name="Lorca G."/>
            <person name="Altermann E."/>
            <person name="Barrangou R."/>
            <person name="Ganesan B."/>
            <person name="Xie Y."/>
            <person name="Rawsthorne H."/>
            <person name="Tamir D."/>
            <person name="Parker C."/>
            <person name="Breidt F."/>
            <person name="Broadbent J.R."/>
            <person name="Hutkins R."/>
            <person name="O'Sullivan D."/>
            <person name="Steele J."/>
            <person name="Unlu G."/>
            <person name="Saier M.H. Jr."/>
            <person name="Klaenhammer T."/>
            <person name="Richardson P."/>
            <person name="Kozyavkin S."/>
            <person name="Weimer B.C."/>
            <person name="Mills D.A."/>
        </authorList>
    </citation>
    <scope>NUCLEOTIDE SEQUENCE [LARGE SCALE GENOMIC DNA]</scope>
    <source>
        <strain>ATCC 33323 / DSM 20243 / BCRC 14619 / CIP 102991 / JCM 1131 / KCTC 3163 / NCIMB 11718 / NCTC 13722 / AM63</strain>
    </source>
</reference>
<sequence length="127" mass="14523">MAYRKLGRDSAHRKAMLREMTTQLIMNERIVTTETRAKEIRKTTEKMITLGKRGDLSARRKAAAFVRNEIADIHEEKDAVVVKSALQKLFSDIAPRYKDRNGGYTRMYKLATPRKGDAAPMVIIELV</sequence>
<dbReference type="EMBL" id="CP000413">
    <property type="protein sequence ID" value="ABJ59723.1"/>
    <property type="molecule type" value="Genomic_DNA"/>
</dbReference>
<dbReference type="RefSeq" id="WP_003647811.1">
    <property type="nucleotide sequence ID" value="NZ_WBMG01000001.1"/>
</dbReference>
<dbReference type="SMR" id="Q045Z9"/>
<dbReference type="GeneID" id="29639584"/>
<dbReference type="KEGG" id="lga:LGAS_0317"/>
<dbReference type="HOGENOM" id="CLU_074407_2_2_9"/>
<dbReference type="BioCyc" id="LGAS324831:G1G6Y-316-MONOMER"/>
<dbReference type="Proteomes" id="UP000000664">
    <property type="component" value="Chromosome"/>
</dbReference>
<dbReference type="GO" id="GO:0022625">
    <property type="term" value="C:cytosolic large ribosomal subunit"/>
    <property type="evidence" value="ECO:0007669"/>
    <property type="project" value="TreeGrafter"/>
</dbReference>
<dbReference type="GO" id="GO:0003735">
    <property type="term" value="F:structural constituent of ribosome"/>
    <property type="evidence" value="ECO:0007669"/>
    <property type="project" value="InterPro"/>
</dbReference>
<dbReference type="GO" id="GO:0006412">
    <property type="term" value="P:translation"/>
    <property type="evidence" value="ECO:0007669"/>
    <property type="project" value="UniProtKB-UniRule"/>
</dbReference>
<dbReference type="FunFam" id="3.90.1030.10:FF:000002">
    <property type="entry name" value="50S ribosomal protein L17"/>
    <property type="match status" value="1"/>
</dbReference>
<dbReference type="Gene3D" id="3.90.1030.10">
    <property type="entry name" value="Ribosomal protein L17"/>
    <property type="match status" value="1"/>
</dbReference>
<dbReference type="HAMAP" id="MF_01368">
    <property type="entry name" value="Ribosomal_bL17"/>
    <property type="match status" value="1"/>
</dbReference>
<dbReference type="InterPro" id="IPR000456">
    <property type="entry name" value="Ribosomal_bL17"/>
</dbReference>
<dbReference type="InterPro" id="IPR047859">
    <property type="entry name" value="Ribosomal_bL17_CS"/>
</dbReference>
<dbReference type="InterPro" id="IPR036373">
    <property type="entry name" value="Ribosomal_bL17_sf"/>
</dbReference>
<dbReference type="NCBIfam" id="TIGR00059">
    <property type="entry name" value="L17"/>
    <property type="match status" value="1"/>
</dbReference>
<dbReference type="PANTHER" id="PTHR14413:SF16">
    <property type="entry name" value="LARGE RIBOSOMAL SUBUNIT PROTEIN BL17M"/>
    <property type="match status" value="1"/>
</dbReference>
<dbReference type="PANTHER" id="PTHR14413">
    <property type="entry name" value="RIBOSOMAL PROTEIN L17"/>
    <property type="match status" value="1"/>
</dbReference>
<dbReference type="Pfam" id="PF01196">
    <property type="entry name" value="Ribosomal_L17"/>
    <property type="match status" value="1"/>
</dbReference>
<dbReference type="SUPFAM" id="SSF64263">
    <property type="entry name" value="Prokaryotic ribosomal protein L17"/>
    <property type="match status" value="1"/>
</dbReference>
<dbReference type="PROSITE" id="PS01167">
    <property type="entry name" value="RIBOSOMAL_L17"/>
    <property type="match status" value="1"/>
</dbReference>